<gene>
    <name evidence="1" type="primary">glyQS</name>
    <name type="ordered locus">SAV1565</name>
</gene>
<evidence type="ECO:0000255" key="1">
    <source>
        <dbReference type="HAMAP-Rule" id="MF_00253"/>
    </source>
</evidence>
<sequence>MAKDMDTIVSLAKHRGFVFPGSDIYGGLSNTWDYGPLGVELKNNVKKAWWQKFITQSPFNVGIDAAILMNPKVWEASGHLNNFNDPMIDNKDSKIRYRADKLIEDYMQDVKGDENFIADGLSFEQMKKIIDDEGIVCPVSKTANWTEIRQFNLMFKTFQGVTEDSTNEIFLRPETAQGIFVNYKNVQRSMRKKLPFGIGQIGKSFRNEITPGNFIFRTREFEQMELEFFCKPGEEIEWQNYWKTFASDWLTSLNMSSENMRLRDHDEDELSHYSNATTDIEYKFPFGWGELWGIASRTDFDLRKHAEHSGEDFRYHDPETNEKYIPYCIEPSLGADRVTLAFLCDAYDEEGVEGSKDARTVLHFHPALAPYKAAILPLSKKLSGEAIKIFEQLSSKFSIDFDESQSIGKRYRRQDEIGTPYCVTFDFDSLEDNQVTVRDRDSMEQVRMPISELEAFLTEKTKF</sequence>
<organism>
    <name type="scientific">Staphylococcus aureus (strain Mu50 / ATCC 700699)</name>
    <dbReference type="NCBI Taxonomy" id="158878"/>
    <lineage>
        <taxon>Bacteria</taxon>
        <taxon>Bacillati</taxon>
        <taxon>Bacillota</taxon>
        <taxon>Bacilli</taxon>
        <taxon>Bacillales</taxon>
        <taxon>Staphylococcaceae</taxon>
        <taxon>Staphylococcus</taxon>
    </lineage>
</organism>
<dbReference type="EC" id="6.1.1.14" evidence="1"/>
<dbReference type="EMBL" id="BA000017">
    <property type="protein sequence ID" value="BAB57727.1"/>
    <property type="molecule type" value="Genomic_DNA"/>
</dbReference>
<dbReference type="RefSeq" id="WP_001030080.1">
    <property type="nucleotide sequence ID" value="NC_002758.2"/>
</dbReference>
<dbReference type="SMR" id="P67034"/>
<dbReference type="KEGG" id="sav:SAV1565"/>
<dbReference type="HOGENOM" id="CLU_015515_2_1_9"/>
<dbReference type="PhylomeDB" id="P67034"/>
<dbReference type="Proteomes" id="UP000002481">
    <property type="component" value="Chromosome"/>
</dbReference>
<dbReference type="GO" id="GO:0005737">
    <property type="term" value="C:cytoplasm"/>
    <property type="evidence" value="ECO:0007669"/>
    <property type="project" value="UniProtKB-SubCell"/>
</dbReference>
<dbReference type="GO" id="GO:0005524">
    <property type="term" value="F:ATP binding"/>
    <property type="evidence" value="ECO:0007669"/>
    <property type="project" value="UniProtKB-UniRule"/>
</dbReference>
<dbReference type="GO" id="GO:0140096">
    <property type="term" value="F:catalytic activity, acting on a protein"/>
    <property type="evidence" value="ECO:0007669"/>
    <property type="project" value="UniProtKB-ARBA"/>
</dbReference>
<dbReference type="GO" id="GO:0004820">
    <property type="term" value="F:glycine-tRNA ligase activity"/>
    <property type="evidence" value="ECO:0000250"/>
    <property type="project" value="UniProtKB"/>
</dbReference>
<dbReference type="GO" id="GO:0046983">
    <property type="term" value="F:protein dimerization activity"/>
    <property type="evidence" value="ECO:0000250"/>
    <property type="project" value="UniProtKB"/>
</dbReference>
<dbReference type="GO" id="GO:0016740">
    <property type="term" value="F:transferase activity"/>
    <property type="evidence" value="ECO:0007669"/>
    <property type="project" value="UniProtKB-ARBA"/>
</dbReference>
<dbReference type="GO" id="GO:0006426">
    <property type="term" value="P:glycyl-tRNA aminoacylation"/>
    <property type="evidence" value="ECO:0007669"/>
    <property type="project" value="UniProtKB-UniRule"/>
</dbReference>
<dbReference type="CDD" id="cd00774">
    <property type="entry name" value="GlyRS-like_core"/>
    <property type="match status" value="1"/>
</dbReference>
<dbReference type="CDD" id="cd00858">
    <property type="entry name" value="GlyRS_anticodon"/>
    <property type="match status" value="1"/>
</dbReference>
<dbReference type="FunFam" id="3.40.50.800:FF:000002">
    <property type="entry name" value="Glycine--tRNA ligase"/>
    <property type="match status" value="1"/>
</dbReference>
<dbReference type="Gene3D" id="3.30.40.230">
    <property type="match status" value="1"/>
</dbReference>
<dbReference type="Gene3D" id="3.40.50.800">
    <property type="entry name" value="Anticodon-binding domain"/>
    <property type="match status" value="1"/>
</dbReference>
<dbReference type="Gene3D" id="3.30.930.10">
    <property type="entry name" value="Bira Bifunctional Protein, Domain 2"/>
    <property type="match status" value="1"/>
</dbReference>
<dbReference type="HAMAP" id="MF_00253_B">
    <property type="entry name" value="Gly_tRNA_synth_B"/>
    <property type="match status" value="1"/>
</dbReference>
<dbReference type="InterPro" id="IPR002314">
    <property type="entry name" value="aa-tRNA-synt_IIb"/>
</dbReference>
<dbReference type="InterPro" id="IPR006195">
    <property type="entry name" value="aa-tRNA-synth_II"/>
</dbReference>
<dbReference type="InterPro" id="IPR045864">
    <property type="entry name" value="aa-tRNA-synth_II/BPL/LPL"/>
</dbReference>
<dbReference type="InterPro" id="IPR004154">
    <property type="entry name" value="Anticodon-bd"/>
</dbReference>
<dbReference type="InterPro" id="IPR036621">
    <property type="entry name" value="Anticodon-bd_dom_sf"/>
</dbReference>
<dbReference type="InterPro" id="IPR027031">
    <property type="entry name" value="Gly-tRNA_synthase/POLG2"/>
</dbReference>
<dbReference type="InterPro" id="IPR022961">
    <property type="entry name" value="Gly_tRNA_ligase_bac"/>
</dbReference>
<dbReference type="InterPro" id="IPR033731">
    <property type="entry name" value="GlyRS-like_core"/>
</dbReference>
<dbReference type="InterPro" id="IPR002315">
    <property type="entry name" value="tRNA-synt_gly"/>
</dbReference>
<dbReference type="NCBIfam" id="TIGR00389">
    <property type="entry name" value="glyS_dimeric"/>
    <property type="match status" value="1"/>
</dbReference>
<dbReference type="NCBIfam" id="NF003211">
    <property type="entry name" value="PRK04173.1"/>
    <property type="match status" value="1"/>
</dbReference>
<dbReference type="PANTHER" id="PTHR10745:SF8">
    <property type="entry name" value="DNA POLYMERASE SUBUNIT GAMMA-2, MITOCHONDRIAL"/>
    <property type="match status" value="1"/>
</dbReference>
<dbReference type="PANTHER" id="PTHR10745">
    <property type="entry name" value="GLYCYL-TRNA SYNTHETASE/DNA POLYMERASE SUBUNIT GAMMA-2"/>
    <property type="match status" value="1"/>
</dbReference>
<dbReference type="Pfam" id="PF03129">
    <property type="entry name" value="HGTP_anticodon"/>
    <property type="match status" value="1"/>
</dbReference>
<dbReference type="Pfam" id="PF00587">
    <property type="entry name" value="tRNA-synt_2b"/>
    <property type="match status" value="1"/>
</dbReference>
<dbReference type="PRINTS" id="PR01043">
    <property type="entry name" value="TRNASYNTHGLY"/>
</dbReference>
<dbReference type="SUPFAM" id="SSF52954">
    <property type="entry name" value="Class II aaRS ABD-related"/>
    <property type="match status" value="1"/>
</dbReference>
<dbReference type="SUPFAM" id="SSF55681">
    <property type="entry name" value="Class II aaRS and biotin synthetases"/>
    <property type="match status" value="1"/>
</dbReference>
<dbReference type="PROSITE" id="PS50862">
    <property type="entry name" value="AA_TRNA_LIGASE_II"/>
    <property type="match status" value="1"/>
</dbReference>
<keyword id="KW-0030">Aminoacyl-tRNA synthetase</keyword>
<keyword id="KW-0067">ATP-binding</keyword>
<keyword id="KW-0963">Cytoplasm</keyword>
<keyword id="KW-0436">Ligase</keyword>
<keyword id="KW-0547">Nucleotide-binding</keyword>
<keyword id="KW-0648">Protein biosynthesis</keyword>
<name>SYG_STAAM</name>
<accession>P67034</accession>
<accession>Q99TT1</accession>
<protein>
    <recommendedName>
        <fullName evidence="1">Glycine--tRNA ligase</fullName>
        <ecNumber evidence="1">6.1.1.14</ecNumber>
    </recommendedName>
    <alternativeName>
        <fullName evidence="1">Glycyl-tRNA synthetase</fullName>
        <shortName evidence="1">GlyRS</shortName>
    </alternativeName>
</protein>
<proteinExistence type="inferred from homology"/>
<comment type="function">
    <text evidence="1">Catalyzes the attachment of glycine to tRNA(Gly).</text>
</comment>
<comment type="catalytic activity">
    <reaction evidence="1">
        <text>tRNA(Gly) + glycine + ATP = glycyl-tRNA(Gly) + AMP + diphosphate</text>
        <dbReference type="Rhea" id="RHEA:16013"/>
        <dbReference type="Rhea" id="RHEA-COMP:9664"/>
        <dbReference type="Rhea" id="RHEA-COMP:9683"/>
        <dbReference type="ChEBI" id="CHEBI:30616"/>
        <dbReference type="ChEBI" id="CHEBI:33019"/>
        <dbReference type="ChEBI" id="CHEBI:57305"/>
        <dbReference type="ChEBI" id="CHEBI:78442"/>
        <dbReference type="ChEBI" id="CHEBI:78522"/>
        <dbReference type="ChEBI" id="CHEBI:456215"/>
        <dbReference type="EC" id="6.1.1.14"/>
    </reaction>
</comment>
<comment type="subunit">
    <text evidence="1">Homodimer.</text>
</comment>
<comment type="subcellular location">
    <subcellularLocation>
        <location evidence="1">Cytoplasm</location>
    </subcellularLocation>
</comment>
<comment type="similarity">
    <text evidence="1">Belongs to the class-II aminoacyl-tRNA synthetase family.</text>
</comment>
<reference key="1">
    <citation type="journal article" date="2001" name="Lancet">
        <title>Whole genome sequencing of meticillin-resistant Staphylococcus aureus.</title>
        <authorList>
            <person name="Kuroda M."/>
            <person name="Ohta T."/>
            <person name="Uchiyama I."/>
            <person name="Baba T."/>
            <person name="Yuzawa H."/>
            <person name="Kobayashi I."/>
            <person name="Cui L."/>
            <person name="Oguchi A."/>
            <person name="Aoki K."/>
            <person name="Nagai Y."/>
            <person name="Lian J.-Q."/>
            <person name="Ito T."/>
            <person name="Kanamori M."/>
            <person name="Matsumaru H."/>
            <person name="Maruyama A."/>
            <person name="Murakami H."/>
            <person name="Hosoyama A."/>
            <person name="Mizutani-Ui Y."/>
            <person name="Takahashi N.K."/>
            <person name="Sawano T."/>
            <person name="Inoue R."/>
            <person name="Kaito C."/>
            <person name="Sekimizu K."/>
            <person name="Hirakawa H."/>
            <person name="Kuhara S."/>
            <person name="Goto S."/>
            <person name="Yabuzaki J."/>
            <person name="Kanehisa M."/>
            <person name="Yamashita A."/>
            <person name="Oshima K."/>
            <person name="Furuya K."/>
            <person name="Yoshino C."/>
            <person name="Shiba T."/>
            <person name="Hattori M."/>
            <person name="Ogasawara N."/>
            <person name="Hayashi H."/>
            <person name="Hiramatsu K."/>
        </authorList>
    </citation>
    <scope>NUCLEOTIDE SEQUENCE [LARGE SCALE GENOMIC DNA]</scope>
    <source>
        <strain>Mu50 / ATCC 700699</strain>
    </source>
</reference>
<feature type="chain" id="PRO_0000072973" description="Glycine--tRNA ligase">
    <location>
        <begin position="1"/>
        <end position="463"/>
    </location>
</feature>
<feature type="binding site" evidence="1">
    <location>
        <position position="98"/>
    </location>
    <ligand>
        <name>substrate</name>
    </ligand>
</feature>
<feature type="binding site" evidence="1">
    <location>
        <position position="174"/>
    </location>
    <ligand>
        <name>substrate</name>
    </ligand>
</feature>
<feature type="binding site" evidence="1">
    <location>
        <begin position="206"/>
        <end position="208"/>
    </location>
    <ligand>
        <name>ATP</name>
        <dbReference type="ChEBI" id="CHEBI:30616"/>
    </ligand>
</feature>
<feature type="binding site" evidence="1">
    <location>
        <begin position="216"/>
        <end position="221"/>
    </location>
    <ligand>
        <name>ATP</name>
        <dbReference type="ChEBI" id="CHEBI:30616"/>
    </ligand>
</feature>
<feature type="binding site" evidence="1">
    <location>
        <begin position="221"/>
        <end position="225"/>
    </location>
    <ligand>
        <name>substrate</name>
    </ligand>
</feature>
<feature type="binding site" evidence="1">
    <location>
        <begin position="290"/>
        <end position="291"/>
    </location>
    <ligand>
        <name>ATP</name>
        <dbReference type="ChEBI" id="CHEBI:30616"/>
    </ligand>
</feature>
<feature type="binding site" evidence="1">
    <location>
        <begin position="330"/>
        <end position="334"/>
    </location>
    <ligand>
        <name>substrate</name>
    </ligand>
</feature>
<feature type="binding site" evidence="1">
    <location>
        <begin position="334"/>
        <end position="337"/>
    </location>
    <ligand>
        <name>ATP</name>
        <dbReference type="ChEBI" id="CHEBI:30616"/>
    </ligand>
</feature>